<protein>
    <recommendedName>
        <fullName evidence="1">Phosphate import ATP-binding protein PstB 2</fullName>
        <ecNumber evidence="1">7.3.2.1</ecNumber>
    </recommendedName>
    <alternativeName>
        <fullName evidence="1">ABC phosphate transporter 2</fullName>
    </alternativeName>
    <alternativeName>
        <fullName evidence="1">Phosphate-transporting ATPase 2</fullName>
    </alternativeName>
</protein>
<reference key="1">
    <citation type="journal article" date="2005" name="Genome Res.">
        <title>Living with two extremes: conclusions from the genome sequence of Natronomonas pharaonis.</title>
        <authorList>
            <person name="Falb M."/>
            <person name="Pfeiffer F."/>
            <person name="Palm P."/>
            <person name="Rodewald K."/>
            <person name="Hickmann V."/>
            <person name="Tittor J."/>
            <person name="Oesterhelt D."/>
        </authorList>
    </citation>
    <scope>NUCLEOTIDE SEQUENCE [LARGE SCALE GENOMIC DNA]</scope>
    <source>
        <strain>ATCC 35678 / DSM 2160 / CIP 103997 / JCM 8858 / NBRC 14720 / NCIMB 2260 / Gabara</strain>
    </source>
</reference>
<name>PSTB2_NATPD</name>
<comment type="function">
    <text evidence="1">Part of the ABC transporter complex PstSACB involved in phosphate import. Responsible for energy coupling to the transport system.</text>
</comment>
<comment type="catalytic activity">
    <reaction evidence="1">
        <text>phosphate(out) + ATP + H2O = ADP + 2 phosphate(in) + H(+)</text>
        <dbReference type="Rhea" id="RHEA:24440"/>
        <dbReference type="ChEBI" id="CHEBI:15377"/>
        <dbReference type="ChEBI" id="CHEBI:15378"/>
        <dbReference type="ChEBI" id="CHEBI:30616"/>
        <dbReference type="ChEBI" id="CHEBI:43474"/>
        <dbReference type="ChEBI" id="CHEBI:456216"/>
        <dbReference type="EC" id="7.3.2.1"/>
    </reaction>
</comment>
<comment type="subunit">
    <text evidence="1">The complex is composed of two ATP-binding proteins (PstB), two transmembrane proteins (PstC and PstA) and a solute-binding protein (PstS).</text>
</comment>
<comment type="subcellular location">
    <subcellularLocation>
        <location evidence="1">Cell membrane</location>
        <topology evidence="1">Peripheral membrane protein</topology>
    </subcellularLocation>
</comment>
<comment type="similarity">
    <text evidence="1">Belongs to the ABC transporter superfamily. Phosphate importer (TC 3.A.1.7) family.</text>
</comment>
<feature type="chain" id="PRO_0000272592" description="Phosphate import ATP-binding protein PstB 2">
    <location>
        <begin position="1"/>
        <end position="284"/>
    </location>
</feature>
<feature type="domain" description="ABC transporter" evidence="1">
    <location>
        <begin position="36"/>
        <end position="278"/>
    </location>
</feature>
<feature type="region of interest" description="Disordered" evidence="2">
    <location>
        <begin position="1"/>
        <end position="29"/>
    </location>
</feature>
<feature type="compositionally biased region" description="Polar residues" evidence="2">
    <location>
        <begin position="1"/>
        <end position="22"/>
    </location>
</feature>
<feature type="binding site" evidence="1">
    <location>
        <begin position="68"/>
        <end position="75"/>
    </location>
    <ligand>
        <name>ATP</name>
        <dbReference type="ChEBI" id="CHEBI:30616"/>
    </ligand>
</feature>
<sequence length="284" mass="30827">MTLLSTLRGISSPARQQPGTQSESRRGGDTLAERGLAVAGVSHGFDGTAVLESVTLAVDRGETVAIIGPSGTGKTTLLRLLALFSEPDDGTIGLDGTDVWRQSERQRLAARRRIGMVFQKANLFDTTVRRNVRYGLSVRRSWRERLRSWLGGRKRQESVFEALDIVGLADAASQSASSLSGGEAQRVAFARALAYDPDFLLLDEPTSDLDPRNTAVIEEAVDAARSRGLGVAVATHDMHQARRIADRIVVLLDGQVIEAGPTERVFSDPDDARARKFINGELVY</sequence>
<keyword id="KW-0067">ATP-binding</keyword>
<keyword id="KW-1003">Cell membrane</keyword>
<keyword id="KW-0472">Membrane</keyword>
<keyword id="KW-0547">Nucleotide-binding</keyword>
<keyword id="KW-0592">Phosphate transport</keyword>
<keyword id="KW-1185">Reference proteome</keyword>
<keyword id="KW-1278">Translocase</keyword>
<keyword id="KW-0813">Transport</keyword>
<evidence type="ECO:0000255" key="1">
    <source>
        <dbReference type="HAMAP-Rule" id="MF_01702"/>
    </source>
</evidence>
<evidence type="ECO:0000256" key="2">
    <source>
        <dbReference type="SAM" id="MobiDB-lite"/>
    </source>
</evidence>
<proteinExistence type="inferred from homology"/>
<accession>Q3IQI3</accession>
<dbReference type="EC" id="7.3.2.1" evidence="1"/>
<dbReference type="EMBL" id="CR936257">
    <property type="protein sequence ID" value="CAI49613.1"/>
    <property type="molecule type" value="Genomic_DNA"/>
</dbReference>
<dbReference type="RefSeq" id="WP_011323235.1">
    <property type="nucleotide sequence ID" value="NC_007426.1"/>
</dbReference>
<dbReference type="SMR" id="Q3IQI3"/>
<dbReference type="STRING" id="348780.NP_3044A"/>
<dbReference type="EnsemblBacteria" id="CAI49613">
    <property type="protein sequence ID" value="CAI49613"/>
    <property type="gene ID" value="NP_3044A"/>
</dbReference>
<dbReference type="GeneID" id="3702432"/>
<dbReference type="KEGG" id="nph:NP_3044A"/>
<dbReference type="eggNOG" id="arCOG00923">
    <property type="taxonomic scope" value="Archaea"/>
</dbReference>
<dbReference type="HOGENOM" id="CLU_000604_1_22_2"/>
<dbReference type="OrthoDB" id="57213at2157"/>
<dbReference type="Proteomes" id="UP000002698">
    <property type="component" value="Chromosome"/>
</dbReference>
<dbReference type="GO" id="GO:0005886">
    <property type="term" value="C:plasma membrane"/>
    <property type="evidence" value="ECO:0007669"/>
    <property type="project" value="UniProtKB-SubCell"/>
</dbReference>
<dbReference type="GO" id="GO:0005524">
    <property type="term" value="F:ATP binding"/>
    <property type="evidence" value="ECO:0007669"/>
    <property type="project" value="UniProtKB-KW"/>
</dbReference>
<dbReference type="GO" id="GO:0016887">
    <property type="term" value="F:ATP hydrolysis activity"/>
    <property type="evidence" value="ECO:0007669"/>
    <property type="project" value="InterPro"/>
</dbReference>
<dbReference type="GO" id="GO:0015415">
    <property type="term" value="F:ATPase-coupled phosphate ion transmembrane transporter activity"/>
    <property type="evidence" value="ECO:0007669"/>
    <property type="project" value="UniProtKB-EC"/>
</dbReference>
<dbReference type="GO" id="GO:0035435">
    <property type="term" value="P:phosphate ion transmembrane transport"/>
    <property type="evidence" value="ECO:0007669"/>
    <property type="project" value="InterPro"/>
</dbReference>
<dbReference type="CDD" id="cd03260">
    <property type="entry name" value="ABC_PstB_phosphate_transporter"/>
    <property type="match status" value="1"/>
</dbReference>
<dbReference type="Gene3D" id="3.40.50.300">
    <property type="entry name" value="P-loop containing nucleotide triphosphate hydrolases"/>
    <property type="match status" value="1"/>
</dbReference>
<dbReference type="InterPro" id="IPR003593">
    <property type="entry name" value="AAA+_ATPase"/>
</dbReference>
<dbReference type="InterPro" id="IPR003439">
    <property type="entry name" value="ABC_transporter-like_ATP-bd"/>
</dbReference>
<dbReference type="InterPro" id="IPR017871">
    <property type="entry name" value="ABC_transporter-like_CS"/>
</dbReference>
<dbReference type="InterPro" id="IPR027417">
    <property type="entry name" value="P-loop_NTPase"/>
</dbReference>
<dbReference type="InterPro" id="IPR005670">
    <property type="entry name" value="PstB-like"/>
</dbReference>
<dbReference type="PANTHER" id="PTHR43423">
    <property type="entry name" value="ABC TRANSPORTER I FAMILY MEMBER 17"/>
    <property type="match status" value="1"/>
</dbReference>
<dbReference type="PANTHER" id="PTHR43423:SF1">
    <property type="entry name" value="ABC TRANSPORTER I FAMILY MEMBER 17"/>
    <property type="match status" value="1"/>
</dbReference>
<dbReference type="Pfam" id="PF00005">
    <property type="entry name" value="ABC_tran"/>
    <property type="match status" value="1"/>
</dbReference>
<dbReference type="SMART" id="SM00382">
    <property type="entry name" value="AAA"/>
    <property type="match status" value="1"/>
</dbReference>
<dbReference type="SUPFAM" id="SSF52540">
    <property type="entry name" value="P-loop containing nucleoside triphosphate hydrolases"/>
    <property type="match status" value="1"/>
</dbReference>
<dbReference type="PROSITE" id="PS00211">
    <property type="entry name" value="ABC_TRANSPORTER_1"/>
    <property type="match status" value="1"/>
</dbReference>
<dbReference type="PROSITE" id="PS50893">
    <property type="entry name" value="ABC_TRANSPORTER_2"/>
    <property type="match status" value="1"/>
</dbReference>
<dbReference type="PROSITE" id="PS51238">
    <property type="entry name" value="PSTB"/>
    <property type="match status" value="1"/>
</dbReference>
<organism>
    <name type="scientific">Natronomonas pharaonis (strain ATCC 35678 / DSM 2160 / CIP 103997 / JCM 8858 / NBRC 14720 / NCIMB 2260 / Gabara)</name>
    <name type="common">Halobacterium pharaonis</name>
    <dbReference type="NCBI Taxonomy" id="348780"/>
    <lineage>
        <taxon>Archaea</taxon>
        <taxon>Methanobacteriati</taxon>
        <taxon>Methanobacteriota</taxon>
        <taxon>Stenosarchaea group</taxon>
        <taxon>Halobacteria</taxon>
        <taxon>Halobacteriales</taxon>
        <taxon>Haloarculaceae</taxon>
        <taxon>Natronomonas</taxon>
    </lineage>
</organism>
<gene>
    <name evidence="1" type="primary">pstB2</name>
    <name type="synonym">abc22a</name>
    <name type="ordered locus">NP_3044A</name>
</gene>